<organism>
    <name type="scientific">Haloferax volcanii (strain ATCC 29605 / DSM 3757 / JCM 8879 / NBRC 14742 / NCIMB 2012 / VKM B-1768 / DS2)</name>
    <name type="common">Halobacterium volcanii</name>
    <dbReference type="NCBI Taxonomy" id="309800"/>
    <lineage>
        <taxon>Archaea</taxon>
        <taxon>Methanobacteriati</taxon>
        <taxon>Methanobacteriota</taxon>
        <taxon>Stenosarchaea group</taxon>
        <taxon>Halobacteria</taxon>
        <taxon>Halobacteriales</taxon>
        <taxon>Haloferacaceae</taxon>
        <taxon>Haloferax</taxon>
    </lineage>
</organism>
<name>Z0758_HALVD</name>
<reference key="1">
    <citation type="journal article" date="2010" name="PLoS ONE">
        <title>The complete genome sequence of Haloferax volcanii DS2, a model archaeon.</title>
        <authorList>
            <person name="Hartman A.L."/>
            <person name="Norais C."/>
            <person name="Badger J.H."/>
            <person name="Delmas S."/>
            <person name="Haldenby S."/>
            <person name="Madupu R."/>
            <person name="Robinson J."/>
            <person name="Khouri H."/>
            <person name="Ren Q."/>
            <person name="Lowe T.M."/>
            <person name="Maupin-Furlow J."/>
            <person name="Pohlschroder M."/>
            <person name="Daniels C."/>
            <person name="Pfeiffer F."/>
            <person name="Allers T."/>
            <person name="Eisen J.A."/>
        </authorList>
    </citation>
    <scope>NUCLEOTIDE SEQUENCE [LARGE SCALE GENOMIC DNA]</scope>
    <source>
        <strain evidence="6">ATCC 29605 / DSM 3757 / JCM 8879 / NBRC 14742 / NCIMB 2012 / VKM B-1768 / DS2</strain>
    </source>
</reference>
<reference key="2">
    <citation type="journal article" date="2019" name="Genes (Basel)">
        <title>Several One-Domain Zinc Finger u-Proteins of Haloferax Volcanii Are Important for Stress Adaptation, Biofilm Formation, and Swarming.</title>
        <authorList>
            <person name="Nagel C."/>
            <person name="Machulla A."/>
            <person name="Zahn S."/>
            <person name="Soppa J."/>
        </authorList>
    </citation>
    <scope>FUNCTION</scope>
    <scope>DISRUPTION PHENOTYPE</scope>
    <source>
        <strain>DS2 / DS70 / H26</strain>
    </source>
</reference>
<reference evidence="7" key="3">
    <citation type="journal article" date="2023" name="Front. Microbiol.">
        <title>Characterization of the zinc finger mu-protein HVO_0758 from Haloferax volcanii: biological roles, zinc binding, and NMR solution structure.</title>
        <authorList>
            <person name="Ueresin D."/>
            <person name="Pyper D.J."/>
            <person name="Borst A."/>
            <person name="Hadjeras L."/>
            <person name="Gelhausen R."/>
            <person name="Backofen R."/>
            <person name="Sharma C."/>
            <person name="Schwalbe H."/>
            <person name="Soppa J."/>
        </authorList>
    </citation>
    <scope>STRUCTURE BY NMR</scope>
    <scope>FUNCTION</scope>
    <scope>ZINC BINDING</scope>
    <scope>DISRUPTION PHENOTYPE</scope>
    <scope>SUBUNIT</scope>
    <scope>MUTAGENESIS OF CYS-23; CYS-26; CYS-45 AND CYS-48</scope>
    <scope>DOMAIN</scope>
    <source>
        <strain>DS2 / DS70 / H26</strain>
    </source>
</reference>
<accession>D4GTQ1</accession>
<accession>L9UND0</accession>
<protein>
    <recommendedName>
        <fullName evidence="3">Zinc finger mu-protein HVO_0758</fullName>
    </recommendedName>
</protein>
<evidence type="ECO:0000269" key="1">
    <source>
    </source>
</evidence>
<evidence type="ECO:0000269" key="2">
    <source>
    </source>
</evidence>
<evidence type="ECO:0000303" key="3">
    <source>
    </source>
</evidence>
<evidence type="ECO:0000305" key="4">
    <source>
    </source>
</evidence>
<evidence type="ECO:0000312" key="5">
    <source>
        <dbReference type="EMBL" id="ADE02780.1"/>
    </source>
</evidence>
<evidence type="ECO:0000312" key="6">
    <source>
        <dbReference type="Proteomes" id="UP000008243"/>
    </source>
</evidence>
<evidence type="ECO:0007744" key="7">
    <source>
        <dbReference type="PDB" id="8Q5B"/>
    </source>
</evidence>
<keyword id="KW-0002">3D-structure</keyword>
<keyword id="KW-0479">Metal-binding</keyword>
<keyword id="KW-1185">Reference proteome</keyword>
<keyword id="KW-0862">Zinc</keyword>
<keyword id="KW-0863">Zinc-finger</keyword>
<gene>
    <name evidence="5" type="ordered locus">HVO_0758</name>
</gene>
<sequence>MKTTRKGLRDGELEKDTYGRLTCSECGESLKKKNDPDEVFSVRICADCGREWKELR</sequence>
<proteinExistence type="evidence at protein level"/>
<comment type="function">
    <text evidence="1 2">Zinc-binding protein that binds one zinc ion (PubMed:38094630). Is involved in biofilm formation, swarming and glycerol metabolism regulation (PubMed:31083437, PubMed:38094630).</text>
</comment>
<comment type="subunit">
    <text evidence="2">Monomer.</text>
</comment>
<comment type="domain">
    <text evidence="2">Consists of an N-terminal alpha helix with several positively charged amino acids that is placed on top of a globular core, which is stabilized by the zinc finger.</text>
</comment>
<comment type="disruption phenotype">
    <text evidence="1 2">Cells lacking this gene show a late onset of growth in synthetic glycerol medium, a lack of swarming during the first 3 days, and enhanced biofilm formation (PubMed:31083437, PubMed:38094630). In this mutant many motility and chemotaxis genes are down-regulated, and some genes encoding pilins and redox proteins are up-regulated (PubMed:38094630).</text>
</comment>
<dbReference type="EMBL" id="CP001956">
    <property type="protein sequence ID" value="ADE02780.1"/>
    <property type="molecule type" value="Genomic_DNA"/>
</dbReference>
<dbReference type="RefSeq" id="WP_004044179.1">
    <property type="nucleotide sequence ID" value="NC_013967.1"/>
</dbReference>
<dbReference type="PDB" id="8Q5B">
    <property type="method" value="NMR"/>
    <property type="chains" value="A=1-56"/>
</dbReference>
<dbReference type="PDBsum" id="8Q5B"/>
<dbReference type="SMR" id="D4GTQ1"/>
<dbReference type="STRING" id="309800.HVO_0758"/>
<dbReference type="PaxDb" id="309800-C498_14943"/>
<dbReference type="EnsemblBacteria" id="ADE02780">
    <property type="protein sequence ID" value="ADE02780"/>
    <property type="gene ID" value="HVO_0758"/>
</dbReference>
<dbReference type="GeneID" id="55575158"/>
<dbReference type="KEGG" id="hvo:HVO_0758"/>
<dbReference type="PATRIC" id="fig|309800.29.peg.2883"/>
<dbReference type="eggNOG" id="arCOG08125">
    <property type="taxonomic scope" value="Archaea"/>
</dbReference>
<dbReference type="HOGENOM" id="CLU_3020861_0_0_2"/>
<dbReference type="OrthoDB" id="165399at2157"/>
<dbReference type="Proteomes" id="UP000008243">
    <property type="component" value="Chromosome"/>
</dbReference>
<dbReference type="GO" id="GO:0008270">
    <property type="term" value="F:zinc ion binding"/>
    <property type="evidence" value="ECO:0007669"/>
    <property type="project" value="UniProtKB-KW"/>
</dbReference>
<dbReference type="InterPro" id="IPR049697">
    <property type="entry name" value="HVO_0758-like"/>
</dbReference>
<dbReference type="NCBIfam" id="NF041912">
    <property type="entry name" value="HVO_0758"/>
    <property type="match status" value="1"/>
</dbReference>
<dbReference type="Pfam" id="PF23137">
    <property type="entry name" value="HVO_0758"/>
    <property type="match status" value="1"/>
</dbReference>
<feature type="chain" id="PRO_0000460354" description="Zinc finger mu-protein HVO_0758">
    <location>
        <begin position="1"/>
        <end position="56"/>
    </location>
</feature>
<feature type="short sequence motif" description="C(P)XCG motif" evidence="4">
    <location>
        <begin position="23"/>
        <end position="27"/>
    </location>
</feature>
<feature type="short sequence motif" description="C(P)XCG motif" evidence="4">
    <location>
        <begin position="45"/>
        <end position="49"/>
    </location>
</feature>
<feature type="binding site" evidence="4">
    <location>
        <position position="23"/>
    </location>
    <ligand>
        <name>Zn(2+)</name>
        <dbReference type="ChEBI" id="CHEBI:29105"/>
    </ligand>
</feature>
<feature type="binding site" evidence="4">
    <location>
        <position position="26"/>
    </location>
    <ligand>
        <name>Zn(2+)</name>
        <dbReference type="ChEBI" id="CHEBI:29105"/>
    </ligand>
</feature>
<feature type="binding site" evidence="4">
    <location>
        <position position="45"/>
    </location>
    <ligand>
        <name>Zn(2+)</name>
        <dbReference type="ChEBI" id="CHEBI:29105"/>
    </ligand>
</feature>
<feature type="binding site" evidence="4">
    <location>
        <position position="48"/>
    </location>
    <ligand>
        <name>Zn(2+)</name>
        <dbReference type="ChEBI" id="CHEBI:29105"/>
    </ligand>
</feature>
<feature type="mutagenesis site" description="Loss of structure and stability." evidence="2">
    <original>C</original>
    <variation>A</variation>
    <location>
        <position position="23"/>
    </location>
</feature>
<feature type="mutagenesis site" description="Loss of structure and stability." evidence="2">
    <original>C</original>
    <variation>A</variation>
    <location>
        <position position="26"/>
    </location>
</feature>
<feature type="mutagenesis site" description="Loss of structure and stability." evidence="2">
    <original>C</original>
    <variation>A</variation>
    <location>
        <position position="45"/>
    </location>
</feature>
<feature type="mutagenesis site" description="Loss of structure and stability." evidence="2">
    <original>C</original>
    <variation>A</variation>
    <location>
        <position position="48"/>
    </location>
</feature>